<organism>
    <name type="scientific">Azobacteroides pseudotrichonymphae genomovar. CFP2</name>
    <dbReference type="NCBI Taxonomy" id="511995"/>
    <lineage>
        <taxon>Bacteria</taxon>
        <taxon>Pseudomonadati</taxon>
        <taxon>Bacteroidota</taxon>
        <taxon>Bacteroidia</taxon>
        <taxon>Bacteroidales</taxon>
        <taxon>Candidatus Azobacteroides</taxon>
    </lineage>
</organism>
<keyword id="KW-0028">Amino-acid biosynthesis</keyword>
<keyword id="KW-0055">Arginine biosynthesis</keyword>
<keyword id="KW-0963">Cytoplasm</keyword>
<keyword id="KW-0521">NADP</keyword>
<keyword id="KW-0560">Oxidoreductase</keyword>
<keyword id="KW-1185">Reference proteome</keyword>
<name>ARGC_AZOPC</name>
<comment type="function">
    <text evidence="1">Catalyzes the NADPH-dependent reduction of N-acetyl-5-glutamyl phosphate to yield N-acetyl-L-glutamate 5-semialdehyde.</text>
</comment>
<comment type="catalytic activity">
    <reaction evidence="1">
        <text>N-acetyl-L-glutamate 5-semialdehyde + phosphate + NADP(+) = N-acetyl-L-glutamyl 5-phosphate + NADPH + H(+)</text>
        <dbReference type="Rhea" id="RHEA:21588"/>
        <dbReference type="ChEBI" id="CHEBI:15378"/>
        <dbReference type="ChEBI" id="CHEBI:29123"/>
        <dbReference type="ChEBI" id="CHEBI:43474"/>
        <dbReference type="ChEBI" id="CHEBI:57783"/>
        <dbReference type="ChEBI" id="CHEBI:57936"/>
        <dbReference type="ChEBI" id="CHEBI:58349"/>
        <dbReference type="EC" id="1.2.1.38"/>
    </reaction>
</comment>
<comment type="pathway">
    <text evidence="1">Amino-acid biosynthesis; L-arginine biosynthesis; N(2)-acetyl-L-ornithine from L-glutamate: step 3/4.</text>
</comment>
<comment type="subcellular location">
    <subcellularLocation>
        <location evidence="1">Cytoplasm</location>
    </subcellularLocation>
</comment>
<comment type="similarity">
    <text evidence="1">Belongs to the NAGSA dehydrogenase family. Type 1 subfamily.</text>
</comment>
<feature type="chain" id="PRO_1000096713" description="N-acetyl-gamma-glutamyl-phosphate reductase">
    <location>
        <begin position="1"/>
        <end position="318"/>
    </location>
</feature>
<feature type="active site" evidence="1">
    <location>
        <position position="132"/>
    </location>
</feature>
<gene>
    <name evidence="1" type="primary">argC</name>
    <name type="ordered locus">CFPG_347</name>
</gene>
<reference key="1">
    <citation type="journal article" date="2008" name="Science">
        <title>Genome of an endosymbiont coupling N2 fixation to cellulolysis within RT protist cells in termite gut.</title>
        <authorList>
            <person name="Hongoh Y."/>
            <person name="Sharma V.K."/>
            <person name="Prakash T."/>
            <person name="Noda S."/>
            <person name="Toh H."/>
            <person name="Taylor T.D."/>
            <person name="Kudo T."/>
            <person name="Sakaki Y."/>
            <person name="Toyoda A."/>
            <person name="Hattori M."/>
            <person name="Ohkuma M."/>
        </authorList>
    </citation>
    <scope>NUCLEOTIDE SEQUENCE [LARGE SCALE GENOMIC DNA]</scope>
</reference>
<evidence type="ECO:0000255" key="1">
    <source>
        <dbReference type="HAMAP-Rule" id="MF_00150"/>
    </source>
</evidence>
<dbReference type="EC" id="1.2.1.38" evidence="1"/>
<dbReference type="EMBL" id="AP010656">
    <property type="protein sequence ID" value="BAG83610.1"/>
    <property type="molecule type" value="Genomic_DNA"/>
</dbReference>
<dbReference type="RefSeq" id="WP_012573371.1">
    <property type="nucleotide sequence ID" value="NC_011565.1"/>
</dbReference>
<dbReference type="SMR" id="B6YQY8"/>
<dbReference type="STRING" id="511995.CFPG_347"/>
<dbReference type="KEGG" id="aps:CFPG_347"/>
<dbReference type="eggNOG" id="COG0002">
    <property type="taxonomic scope" value="Bacteria"/>
</dbReference>
<dbReference type="HOGENOM" id="CLU_006384_0_1_10"/>
<dbReference type="OrthoDB" id="9801289at2"/>
<dbReference type="UniPathway" id="UPA00068">
    <property type="reaction ID" value="UER00108"/>
</dbReference>
<dbReference type="Proteomes" id="UP000000723">
    <property type="component" value="Chromosome"/>
</dbReference>
<dbReference type="GO" id="GO:0005737">
    <property type="term" value="C:cytoplasm"/>
    <property type="evidence" value="ECO:0007669"/>
    <property type="project" value="UniProtKB-SubCell"/>
</dbReference>
<dbReference type="GO" id="GO:0003942">
    <property type="term" value="F:N-acetyl-gamma-glutamyl-phosphate reductase activity"/>
    <property type="evidence" value="ECO:0007669"/>
    <property type="project" value="UniProtKB-UniRule"/>
</dbReference>
<dbReference type="GO" id="GO:0051287">
    <property type="term" value="F:NAD binding"/>
    <property type="evidence" value="ECO:0007669"/>
    <property type="project" value="InterPro"/>
</dbReference>
<dbReference type="GO" id="GO:0070401">
    <property type="term" value="F:NADP+ binding"/>
    <property type="evidence" value="ECO:0007669"/>
    <property type="project" value="InterPro"/>
</dbReference>
<dbReference type="GO" id="GO:0006526">
    <property type="term" value="P:L-arginine biosynthetic process"/>
    <property type="evidence" value="ECO:0007669"/>
    <property type="project" value="UniProtKB-UniRule"/>
</dbReference>
<dbReference type="CDD" id="cd23934">
    <property type="entry name" value="AGPR_1_C"/>
    <property type="match status" value="1"/>
</dbReference>
<dbReference type="CDD" id="cd17895">
    <property type="entry name" value="AGPR_1_N"/>
    <property type="match status" value="1"/>
</dbReference>
<dbReference type="Gene3D" id="3.30.360.10">
    <property type="entry name" value="Dihydrodipicolinate Reductase, domain 2"/>
    <property type="match status" value="1"/>
</dbReference>
<dbReference type="Gene3D" id="3.40.50.720">
    <property type="entry name" value="NAD(P)-binding Rossmann-like Domain"/>
    <property type="match status" value="1"/>
</dbReference>
<dbReference type="HAMAP" id="MF_00150">
    <property type="entry name" value="ArgC_type1"/>
    <property type="match status" value="1"/>
</dbReference>
<dbReference type="InterPro" id="IPR023013">
    <property type="entry name" value="AGPR_AS"/>
</dbReference>
<dbReference type="InterPro" id="IPR000706">
    <property type="entry name" value="AGPR_type-1"/>
</dbReference>
<dbReference type="InterPro" id="IPR036291">
    <property type="entry name" value="NAD(P)-bd_dom_sf"/>
</dbReference>
<dbReference type="InterPro" id="IPR050085">
    <property type="entry name" value="NAGSA_dehydrogenase"/>
</dbReference>
<dbReference type="InterPro" id="IPR000534">
    <property type="entry name" value="Semialdehyde_DH_NAD-bd"/>
</dbReference>
<dbReference type="NCBIfam" id="TIGR01850">
    <property type="entry name" value="argC"/>
    <property type="match status" value="1"/>
</dbReference>
<dbReference type="PANTHER" id="PTHR32338:SF10">
    <property type="entry name" value="N-ACETYL-GAMMA-GLUTAMYL-PHOSPHATE REDUCTASE, CHLOROPLASTIC-RELATED"/>
    <property type="match status" value="1"/>
</dbReference>
<dbReference type="PANTHER" id="PTHR32338">
    <property type="entry name" value="N-ACETYL-GAMMA-GLUTAMYL-PHOSPHATE REDUCTASE, CHLOROPLASTIC-RELATED-RELATED"/>
    <property type="match status" value="1"/>
</dbReference>
<dbReference type="Pfam" id="PF01118">
    <property type="entry name" value="Semialdhyde_dh"/>
    <property type="match status" value="1"/>
</dbReference>
<dbReference type="Pfam" id="PF22698">
    <property type="entry name" value="Semialdhyde_dhC_1"/>
    <property type="match status" value="1"/>
</dbReference>
<dbReference type="SMART" id="SM00859">
    <property type="entry name" value="Semialdhyde_dh"/>
    <property type="match status" value="1"/>
</dbReference>
<dbReference type="SUPFAM" id="SSF55347">
    <property type="entry name" value="Glyceraldehyde-3-phosphate dehydrogenase-like, C-terminal domain"/>
    <property type="match status" value="1"/>
</dbReference>
<dbReference type="SUPFAM" id="SSF51735">
    <property type="entry name" value="NAD(P)-binding Rossmann-fold domains"/>
    <property type="match status" value="1"/>
</dbReference>
<dbReference type="PROSITE" id="PS01224">
    <property type="entry name" value="ARGC"/>
    <property type="match status" value="1"/>
</dbReference>
<protein>
    <recommendedName>
        <fullName evidence="1">N-acetyl-gamma-glutamyl-phosphate reductase</fullName>
        <shortName evidence="1">AGPR</shortName>
        <ecNumber evidence="1">1.2.1.38</ecNumber>
    </recommendedName>
    <alternativeName>
        <fullName evidence="1">N-acetyl-glutamate semialdehyde dehydrogenase</fullName>
        <shortName evidence="1">NAGSA dehydrogenase</shortName>
    </alternativeName>
</protein>
<sequence>MVKVGIIGGGGYTAGELIRLLINHPNVNIIFVHSYSNARNKIIDIHTGLIGEMDLIFSDSYDLNEIDVLFLCSAHGDSKKFIETHTIHTELKIIDLSIDFRHKENAGGFVYGLPELNKEIIRKAQYIANPGCFATAVQLALLPLAKKNLLRSEIHINAITGSTGAGVRPTASSHFSWRNNNISVYKAFTHQHLKEITESLNYEPSRFNFIPVRGNFSRGIFATVYTESNLDIKDAVQIYSNYYEDSAFTFISDKNPDLKQVINTNKCILHLEKHGNKLFIISIIDNLLKGASGQAVQNFNLICGLNEKTGLFLKANAF</sequence>
<accession>B6YQY8</accession>
<proteinExistence type="inferred from homology"/>